<dbReference type="EMBL" id="AE014074">
    <property type="protein sequence ID" value="AAM79412.1"/>
    <property type="molecule type" value="Genomic_DNA"/>
</dbReference>
<dbReference type="RefSeq" id="WP_011054492.1">
    <property type="nucleotide sequence ID" value="NC_004070.1"/>
</dbReference>
<dbReference type="SMR" id="P0DC90"/>
<dbReference type="CAZy" id="GH23">
    <property type="family name" value="Glycoside Hydrolase Family 23"/>
</dbReference>
<dbReference type="KEGG" id="spg:SpyM3_0805"/>
<dbReference type="HOGENOM" id="CLU_101375_3_0_9"/>
<dbReference type="Proteomes" id="UP000000564">
    <property type="component" value="Chromosome"/>
</dbReference>
<dbReference type="GO" id="GO:0009986">
    <property type="term" value="C:cell surface"/>
    <property type="evidence" value="ECO:0007669"/>
    <property type="project" value="UniProtKB-SubCell"/>
</dbReference>
<dbReference type="CDD" id="cd16891">
    <property type="entry name" value="CwlT-like"/>
    <property type="match status" value="1"/>
</dbReference>
<dbReference type="Gene3D" id="1.10.530.10">
    <property type="match status" value="1"/>
</dbReference>
<dbReference type="InterPro" id="IPR047194">
    <property type="entry name" value="CwlT-like_lysozyme"/>
</dbReference>
<dbReference type="InterPro" id="IPR023346">
    <property type="entry name" value="Lysozyme-like_dom_sf"/>
</dbReference>
<dbReference type="Pfam" id="PF13702">
    <property type="entry name" value="Lysozyme_like"/>
    <property type="match status" value="1"/>
</dbReference>
<dbReference type="SUPFAM" id="SSF53955">
    <property type="entry name" value="Lysozyme-like"/>
    <property type="match status" value="1"/>
</dbReference>
<feature type="chain" id="PRO_0000097112" description="Pneumococcal vaccine antigen A homolog">
    <location>
        <begin position="1"/>
        <end position="199"/>
    </location>
</feature>
<name>PVAA_STRP3</name>
<accession>P0DC90</accession>
<accession>Q8K7H6</accession>
<comment type="subcellular location">
    <subcellularLocation>
        <location evidence="1">Cell surface</location>
    </subcellularLocation>
</comment>
<evidence type="ECO:0000250" key="1"/>
<gene>
    <name type="primary">pvaA</name>
    <name type="ordered locus">SpyM3_0805</name>
</gene>
<proteinExistence type="inferred from homology"/>
<sequence>MFRLLKRACSFLLLFVIYQSFVIHHNVQRVLAYKPMVEKTLAENDTKANVDLVLAMIYTETKGGEADVMQSSESSSGQKNSITDSQASIEHGVNLLSHNLALAEEAGVDSWTAVQAYNFGTAYIDYIAKHGSQNTVDLATTYSKTVVAPSLGNTSGQTYFYYHPLALISGGKLYKNGGNIYYSREVHFNLYLIELMSLF</sequence>
<reference key="1">
    <citation type="journal article" date="2002" name="Proc. Natl. Acad. Sci. U.S.A.">
        <title>Genome sequence of a serotype M3 strain of group A Streptococcus: phage-encoded toxins, the high-virulence phenotype, and clone emergence.</title>
        <authorList>
            <person name="Beres S.B."/>
            <person name="Sylva G.L."/>
            <person name="Barbian K.D."/>
            <person name="Lei B."/>
            <person name="Hoff J.S."/>
            <person name="Mammarella N.D."/>
            <person name="Liu M.-Y."/>
            <person name="Smoot J.C."/>
            <person name="Porcella S.F."/>
            <person name="Parkins L.D."/>
            <person name="Campbell D.S."/>
            <person name="Smith T.M."/>
            <person name="McCormick J.K."/>
            <person name="Leung D.Y.M."/>
            <person name="Schlievert P.M."/>
            <person name="Musser J.M."/>
        </authorList>
    </citation>
    <scope>NUCLEOTIDE SEQUENCE [LARGE SCALE GENOMIC DNA]</scope>
    <source>
        <strain>ATCC BAA-595 / MGAS315</strain>
    </source>
</reference>
<protein>
    <recommendedName>
        <fullName>Pneumococcal vaccine antigen A homolog</fullName>
    </recommendedName>
</protein>
<organism>
    <name type="scientific">Streptococcus pyogenes serotype M3 (strain ATCC BAA-595 / MGAS315)</name>
    <dbReference type="NCBI Taxonomy" id="198466"/>
    <lineage>
        <taxon>Bacteria</taxon>
        <taxon>Bacillati</taxon>
        <taxon>Bacillota</taxon>
        <taxon>Bacilli</taxon>
        <taxon>Lactobacillales</taxon>
        <taxon>Streptococcaceae</taxon>
        <taxon>Streptococcus</taxon>
    </lineage>
</organism>